<dbReference type="EC" id="6.1.1.17" evidence="1"/>
<dbReference type="EMBL" id="AP008937">
    <property type="protein sequence ID" value="BAG26595.1"/>
    <property type="molecule type" value="Genomic_DNA"/>
</dbReference>
<dbReference type="RefSeq" id="WP_012390831.1">
    <property type="nucleotide sequence ID" value="NC_010610.1"/>
</dbReference>
<dbReference type="SMR" id="B2GAB3"/>
<dbReference type="KEGG" id="lfe:LAF_0259"/>
<dbReference type="eggNOG" id="COG0008">
    <property type="taxonomic scope" value="Bacteria"/>
</dbReference>
<dbReference type="HOGENOM" id="CLU_015768_6_1_9"/>
<dbReference type="Proteomes" id="UP000001697">
    <property type="component" value="Chromosome"/>
</dbReference>
<dbReference type="GO" id="GO:0005829">
    <property type="term" value="C:cytosol"/>
    <property type="evidence" value="ECO:0007669"/>
    <property type="project" value="TreeGrafter"/>
</dbReference>
<dbReference type="GO" id="GO:0005524">
    <property type="term" value="F:ATP binding"/>
    <property type="evidence" value="ECO:0007669"/>
    <property type="project" value="UniProtKB-UniRule"/>
</dbReference>
<dbReference type="GO" id="GO:0004818">
    <property type="term" value="F:glutamate-tRNA ligase activity"/>
    <property type="evidence" value="ECO:0007669"/>
    <property type="project" value="UniProtKB-UniRule"/>
</dbReference>
<dbReference type="GO" id="GO:0000049">
    <property type="term" value="F:tRNA binding"/>
    <property type="evidence" value="ECO:0007669"/>
    <property type="project" value="InterPro"/>
</dbReference>
<dbReference type="GO" id="GO:0008270">
    <property type="term" value="F:zinc ion binding"/>
    <property type="evidence" value="ECO:0007669"/>
    <property type="project" value="InterPro"/>
</dbReference>
<dbReference type="GO" id="GO:0006424">
    <property type="term" value="P:glutamyl-tRNA aminoacylation"/>
    <property type="evidence" value="ECO:0007669"/>
    <property type="project" value="UniProtKB-UniRule"/>
</dbReference>
<dbReference type="CDD" id="cd00808">
    <property type="entry name" value="GluRS_core"/>
    <property type="match status" value="1"/>
</dbReference>
<dbReference type="FunFam" id="1.10.10.350:FF:000002">
    <property type="entry name" value="Glutamate--tRNA ligase"/>
    <property type="match status" value="1"/>
</dbReference>
<dbReference type="FunFam" id="3.40.50.620:FF:000007">
    <property type="entry name" value="Glutamate--tRNA ligase"/>
    <property type="match status" value="1"/>
</dbReference>
<dbReference type="Gene3D" id="1.10.10.350">
    <property type="match status" value="1"/>
</dbReference>
<dbReference type="Gene3D" id="3.40.50.620">
    <property type="entry name" value="HUPs"/>
    <property type="match status" value="1"/>
</dbReference>
<dbReference type="HAMAP" id="MF_00022">
    <property type="entry name" value="Glu_tRNA_synth_type1"/>
    <property type="match status" value="1"/>
</dbReference>
<dbReference type="InterPro" id="IPR045462">
    <property type="entry name" value="aa-tRNA-synth_I_cd-bd"/>
</dbReference>
<dbReference type="InterPro" id="IPR020751">
    <property type="entry name" value="aa-tRNA-synth_I_codon-bd_sub2"/>
</dbReference>
<dbReference type="InterPro" id="IPR001412">
    <property type="entry name" value="aa-tRNA-synth_I_CS"/>
</dbReference>
<dbReference type="InterPro" id="IPR008925">
    <property type="entry name" value="aa_tRNA-synth_I_cd-bd_sf"/>
</dbReference>
<dbReference type="InterPro" id="IPR004527">
    <property type="entry name" value="Glu-tRNA-ligase_bac/mito"/>
</dbReference>
<dbReference type="InterPro" id="IPR000924">
    <property type="entry name" value="Glu/Gln-tRNA-synth"/>
</dbReference>
<dbReference type="InterPro" id="IPR020058">
    <property type="entry name" value="Glu/Gln-tRNA-synth_Ib_cat-dom"/>
</dbReference>
<dbReference type="InterPro" id="IPR049940">
    <property type="entry name" value="GluQ/Sye"/>
</dbReference>
<dbReference type="InterPro" id="IPR033910">
    <property type="entry name" value="GluRS_core"/>
</dbReference>
<dbReference type="InterPro" id="IPR014729">
    <property type="entry name" value="Rossmann-like_a/b/a_fold"/>
</dbReference>
<dbReference type="NCBIfam" id="TIGR00464">
    <property type="entry name" value="gltX_bact"/>
    <property type="match status" value="1"/>
</dbReference>
<dbReference type="PANTHER" id="PTHR43311">
    <property type="entry name" value="GLUTAMATE--TRNA LIGASE"/>
    <property type="match status" value="1"/>
</dbReference>
<dbReference type="PANTHER" id="PTHR43311:SF2">
    <property type="entry name" value="GLUTAMATE--TRNA LIGASE, MITOCHONDRIAL-RELATED"/>
    <property type="match status" value="1"/>
</dbReference>
<dbReference type="Pfam" id="PF19269">
    <property type="entry name" value="Anticodon_2"/>
    <property type="match status" value="1"/>
</dbReference>
<dbReference type="Pfam" id="PF00749">
    <property type="entry name" value="tRNA-synt_1c"/>
    <property type="match status" value="1"/>
</dbReference>
<dbReference type="PRINTS" id="PR00987">
    <property type="entry name" value="TRNASYNTHGLU"/>
</dbReference>
<dbReference type="SUPFAM" id="SSF48163">
    <property type="entry name" value="An anticodon-binding domain of class I aminoacyl-tRNA synthetases"/>
    <property type="match status" value="1"/>
</dbReference>
<dbReference type="SUPFAM" id="SSF52374">
    <property type="entry name" value="Nucleotidylyl transferase"/>
    <property type="match status" value="1"/>
</dbReference>
<dbReference type="PROSITE" id="PS00178">
    <property type="entry name" value="AA_TRNA_LIGASE_I"/>
    <property type="match status" value="1"/>
</dbReference>
<name>SYE_LIMF3</name>
<protein>
    <recommendedName>
        <fullName evidence="1">Glutamate--tRNA ligase</fullName>
        <ecNumber evidence="1">6.1.1.17</ecNumber>
    </recommendedName>
    <alternativeName>
        <fullName evidence="1">Glutamyl-tRNA synthetase</fullName>
        <shortName evidence="1">GluRS</shortName>
    </alternativeName>
</protein>
<keyword id="KW-0030">Aminoacyl-tRNA synthetase</keyword>
<keyword id="KW-0067">ATP-binding</keyword>
<keyword id="KW-0963">Cytoplasm</keyword>
<keyword id="KW-0436">Ligase</keyword>
<keyword id="KW-0547">Nucleotide-binding</keyword>
<keyword id="KW-0648">Protein biosynthesis</keyword>
<keyword id="KW-1185">Reference proteome</keyword>
<comment type="function">
    <text evidence="1">Catalyzes the attachment of glutamate to tRNA(Glu) in a two-step reaction: glutamate is first activated by ATP to form Glu-AMP and then transferred to the acceptor end of tRNA(Glu).</text>
</comment>
<comment type="catalytic activity">
    <reaction evidence="1">
        <text>tRNA(Glu) + L-glutamate + ATP = L-glutamyl-tRNA(Glu) + AMP + diphosphate</text>
        <dbReference type="Rhea" id="RHEA:23540"/>
        <dbReference type="Rhea" id="RHEA-COMP:9663"/>
        <dbReference type="Rhea" id="RHEA-COMP:9680"/>
        <dbReference type="ChEBI" id="CHEBI:29985"/>
        <dbReference type="ChEBI" id="CHEBI:30616"/>
        <dbReference type="ChEBI" id="CHEBI:33019"/>
        <dbReference type="ChEBI" id="CHEBI:78442"/>
        <dbReference type="ChEBI" id="CHEBI:78520"/>
        <dbReference type="ChEBI" id="CHEBI:456215"/>
        <dbReference type="EC" id="6.1.1.17"/>
    </reaction>
</comment>
<comment type="subunit">
    <text evidence="1">Monomer.</text>
</comment>
<comment type="subcellular location">
    <subcellularLocation>
        <location evidence="1">Cytoplasm</location>
    </subcellularLocation>
</comment>
<comment type="similarity">
    <text evidence="1">Belongs to the class-I aminoacyl-tRNA synthetase family. Glutamate--tRNA ligase type 1 subfamily.</text>
</comment>
<sequence length="498" mass="57508">MSKNEIRVRYAPSPTGHLHIGNARTALFNYLFARHNHGKFIIRIEDTDTKRNIADGERSQLDNLKWMGLDWDEGPDKGGDFGPYRQSERKDIYAQYIQELMDKGLAYKSYMTEEELEAQREAQKAAHQMPHYEYEYAGMSDDQIKAAQEAAEEKGLKPVIRFRVPKDEVFEWEDLVKGPMSFEAQSIGGDFVIQKRDGMPTYNFAVVIDDHLMKISHVFRGDDHVSNTPKQMAIYQALGWKVPEFGHMSLIINNETGKKLSKRDESVLQFIEQYRDLGYLPEAMDNFIILLGWSPVGEDEIFSLKEFVKMYDEKRLSKSPAAFDRKKLQWINNQYMKLSSADEVFHVAMPQLLDAGLIEKNANPYKMEWMRRLVELFKREISYAREIVDYVKPFVNGPEDISEEAKAEMQEDTALVVIKAFRDRVAAMDFMDATGVLAAIKDVQKSTKVKGRKLWMPLRIAVTHETHGPELPESIELFGQEKTLAHLDEMIAQLEENK</sequence>
<feature type="chain" id="PRO_1000090083" description="Glutamate--tRNA ligase">
    <location>
        <begin position="1"/>
        <end position="498"/>
    </location>
</feature>
<feature type="short sequence motif" description="'HIGH' region" evidence="1">
    <location>
        <begin position="12"/>
        <end position="22"/>
    </location>
</feature>
<feature type="short sequence motif" description="'KMSKS' region" evidence="1">
    <location>
        <begin position="259"/>
        <end position="263"/>
    </location>
</feature>
<feature type="binding site" evidence="1">
    <location>
        <position position="262"/>
    </location>
    <ligand>
        <name>ATP</name>
        <dbReference type="ChEBI" id="CHEBI:30616"/>
    </ligand>
</feature>
<gene>
    <name evidence="1" type="primary">gltX</name>
    <name type="ordered locus">LAF_0259</name>
</gene>
<organism>
    <name type="scientific">Limosilactobacillus fermentum (strain NBRC 3956 / LMG 18251)</name>
    <name type="common">Lactobacillus fermentum</name>
    <dbReference type="NCBI Taxonomy" id="334390"/>
    <lineage>
        <taxon>Bacteria</taxon>
        <taxon>Bacillati</taxon>
        <taxon>Bacillota</taxon>
        <taxon>Bacilli</taxon>
        <taxon>Lactobacillales</taxon>
        <taxon>Lactobacillaceae</taxon>
        <taxon>Limosilactobacillus</taxon>
    </lineage>
</organism>
<reference key="1">
    <citation type="journal article" date="2008" name="DNA Res.">
        <title>Comparative genome analysis of Lactobacillus reuteri and Lactobacillus fermentum reveal a genomic island for reuterin and cobalamin production.</title>
        <authorList>
            <person name="Morita H."/>
            <person name="Toh H."/>
            <person name="Fukuda S."/>
            <person name="Horikawa H."/>
            <person name="Oshima K."/>
            <person name="Suzuki T."/>
            <person name="Murakami M."/>
            <person name="Hisamatsu S."/>
            <person name="Kato Y."/>
            <person name="Takizawa T."/>
            <person name="Fukuoka H."/>
            <person name="Yoshimura T."/>
            <person name="Itoh K."/>
            <person name="O'Sullivan D.J."/>
            <person name="McKay L.L."/>
            <person name="Ohno H."/>
            <person name="Kikuchi J."/>
            <person name="Masaoka T."/>
            <person name="Hattori M."/>
        </authorList>
    </citation>
    <scope>NUCLEOTIDE SEQUENCE [LARGE SCALE GENOMIC DNA]</scope>
    <source>
        <strain>NBRC 3956 / LMG 18251</strain>
    </source>
</reference>
<evidence type="ECO:0000255" key="1">
    <source>
        <dbReference type="HAMAP-Rule" id="MF_00022"/>
    </source>
</evidence>
<accession>B2GAB3</accession>
<proteinExistence type="inferred from homology"/>